<comment type="function">
    <text evidence="1">Specifically dimethylates two adjacent adenosines (A1518 and A1519) in the loop of a conserved hairpin near the 3'-end of 16S rRNA in the 30S particle. May play a critical role in biogenesis of 30S subunits.</text>
</comment>
<comment type="catalytic activity">
    <reaction evidence="1">
        <text>adenosine(1518)/adenosine(1519) in 16S rRNA + 4 S-adenosyl-L-methionine = N(6)-dimethyladenosine(1518)/N(6)-dimethyladenosine(1519) in 16S rRNA + 4 S-adenosyl-L-homocysteine + 4 H(+)</text>
        <dbReference type="Rhea" id="RHEA:19609"/>
        <dbReference type="Rhea" id="RHEA-COMP:10232"/>
        <dbReference type="Rhea" id="RHEA-COMP:10233"/>
        <dbReference type="ChEBI" id="CHEBI:15378"/>
        <dbReference type="ChEBI" id="CHEBI:57856"/>
        <dbReference type="ChEBI" id="CHEBI:59789"/>
        <dbReference type="ChEBI" id="CHEBI:74411"/>
        <dbReference type="ChEBI" id="CHEBI:74493"/>
        <dbReference type="EC" id="2.1.1.182"/>
    </reaction>
</comment>
<comment type="subcellular location">
    <subcellularLocation>
        <location evidence="1">Cytoplasm</location>
    </subcellularLocation>
</comment>
<comment type="similarity">
    <text evidence="1">Belongs to the class I-like SAM-binding methyltransferase superfamily. rRNA adenine N(6)-methyltransferase family. RsmA subfamily.</text>
</comment>
<keyword id="KW-0963">Cytoplasm</keyword>
<keyword id="KW-0489">Methyltransferase</keyword>
<keyword id="KW-0694">RNA-binding</keyword>
<keyword id="KW-0698">rRNA processing</keyword>
<keyword id="KW-0949">S-adenosyl-L-methionine</keyword>
<keyword id="KW-0808">Transferase</keyword>
<proteinExistence type="inferred from homology"/>
<feature type="chain" id="PRO_1000056633" description="Ribosomal RNA small subunit methyltransferase A">
    <location>
        <begin position="1"/>
        <end position="295"/>
    </location>
</feature>
<feature type="binding site" evidence="1">
    <location>
        <position position="29"/>
    </location>
    <ligand>
        <name>S-adenosyl-L-methionine</name>
        <dbReference type="ChEBI" id="CHEBI:59789"/>
    </ligand>
</feature>
<feature type="binding site" evidence="1">
    <location>
        <position position="31"/>
    </location>
    <ligand>
        <name>S-adenosyl-L-methionine</name>
        <dbReference type="ChEBI" id="CHEBI:59789"/>
    </ligand>
</feature>
<feature type="binding site" evidence="1">
    <location>
        <position position="56"/>
    </location>
    <ligand>
        <name>S-adenosyl-L-methionine</name>
        <dbReference type="ChEBI" id="CHEBI:59789"/>
    </ligand>
</feature>
<feature type="binding site" evidence="1">
    <location>
        <position position="77"/>
    </location>
    <ligand>
        <name>S-adenosyl-L-methionine</name>
        <dbReference type="ChEBI" id="CHEBI:59789"/>
    </ligand>
</feature>
<feature type="binding site" evidence="1">
    <location>
        <position position="102"/>
    </location>
    <ligand>
        <name>S-adenosyl-L-methionine</name>
        <dbReference type="ChEBI" id="CHEBI:59789"/>
    </ligand>
</feature>
<feature type="binding site" evidence="1">
    <location>
        <position position="128"/>
    </location>
    <ligand>
        <name>S-adenosyl-L-methionine</name>
        <dbReference type="ChEBI" id="CHEBI:59789"/>
    </ligand>
</feature>
<gene>
    <name evidence="1" type="primary">rsmA</name>
    <name evidence="1" type="synonym">ksgA</name>
    <name type="ordered locus">lwe0157</name>
</gene>
<organism>
    <name type="scientific">Listeria welshimeri serovar 6b (strain ATCC 35897 / DSM 20650 / CCUG 15529 / CIP 8149 / NCTC 11857 / SLCC 5334 / V8)</name>
    <dbReference type="NCBI Taxonomy" id="386043"/>
    <lineage>
        <taxon>Bacteria</taxon>
        <taxon>Bacillati</taxon>
        <taxon>Bacillota</taxon>
        <taxon>Bacilli</taxon>
        <taxon>Bacillales</taxon>
        <taxon>Listeriaceae</taxon>
        <taxon>Listeria</taxon>
    </lineage>
</organism>
<reference key="1">
    <citation type="journal article" date="2006" name="J. Bacteriol.">
        <title>Whole-genome sequence of Listeria welshimeri reveals common steps in genome reduction with Listeria innocua as compared to Listeria monocytogenes.</title>
        <authorList>
            <person name="Hain T."/>
            <person name="Steinweg C."/>
            <person name="Kuenne C.T."/>
            <person name="Billion A."/>
            <person name="Ghai R."/>
            <person name="Chatterjee S.S."/>
            <person name="Domann E."/>
            <person name="Kaerst U."/>
            <person name="Goesmann A."/>
            <person name="Bekel T."/>
            <person name="Bartels D."/>
            <person name="Kaiser O."/>
            <person name="Meyer F."/>
            <person name="Puehler A."/>
            <person name="Weisshaar B."/>
            <person name="Wehland J."/>
            <person name="Liang C."/>
            <person name="Dandekar T."/>
            <person name="Lampidis R."/>
            <person name="Kreft J."/>
            <person name="Goebel W."/>
            <person name="Chakraborty T."/>
        </authorList>
    </citation>
    <scope>NUCLEOTIDE SEQUENCE [LARGE SCALE GENOMIC DNA]</scope>
    <source>
        <strain>ATCC 35897 / DSM 20650 / CCUG 15529 / CIP 8149 / NCTC 11857 / SLCC 5334 / V8</strain>
    </source>
</reference>
<name>RSMA_LISW6</name>
<accession>A0AEZ3</accession>
<protein>
    <recommendedName>
        <fullName evidence="1">Ribosomal RNA small subunit methyltransferase A</fullName>
        <ecNumber evidence="1">2.1.1.182</ecNumber>
    </recommendedName>
    <alternativeName>
        <fullName evidence="1">16S rRNA (adenine(1518)-N(6)/adenine(1519)-N(6))-dimethyltransferase</fullName>
    </alternativeName>
    <alternativeName>
        <fullName evidence="1">16S rRNA dimethyladenosine transferase</fullName>
    </alternativeName>
    <alternativeName>
        <fullName evidence="1">16S rRNA dimethylase</fullName>
    </alternativeName>
    <alternativeName>
        <fullName evidence="1">S-adenosylmethionine-6-N', N'-adenosyl(rRNA) dimethyltransferase</fullName>
    </alternativeName>
</protein>
<sequence>MSKDIATPGKTTEILKKYGFLFKKSLGQNFLIDSNILTRITDTAGISKETNVIEIGPGIGALTEQLAKTANEVVAFEIDQRLLPILDDTLSAYNNIQVVHGDVLKADVEEVITQQFSKSELPLKIVANLPYYVTTPIILKLLHDNIPADSMTFMLQKEVADRISAVPSTKSYGSLTIAIQFYMEAELAFIVPKTVFMPQPNVDSAVIHLKRRKEPLAKVNDEEFFFEVTRASFAQRRKTLWNNLASKFPALKPRKDELVEGLNAIGIDLIRRGETLDIPEFAKLSNFLADFLEEK</sequence>
<dbReference type="EC" id="2.1.1.182" evidence="1"/>
<dbReference type="EMBL" id="AM263198">
    <property type="protein sequence ID" value="CAK19575.1"/>
    <property type="molecule type" value="Genomic_DNA"/>
</dbReference>
<dbReference type="RefSeq" id="WP_011701026.1">
    <property type="nucleotide sequence ID" value="NC_008555.1"/>
</dbReference>
<dbReference type="SMR" id="A0AEZ3"/>
<dbReference type="STRING" id="386043.lwe0157"/>
<dbReference type="GeneID" id="61188037"/>
<dbReference type="KEGG" id="lwe:lwe0157"/>
<dbReference type="eggNOG" id="COG0030">
    <property type="taxonomic scope" value="Bacteria"/>
</dbReference>
<dbReference type="HOGENOM" id="CLU_041220_0_0_9"/>
<dbReference type="OrthoDB" id="9814755at2"/>
<dbReference type="Proteomes" id="UP000000779">
    <property type="component" value="Chromosome"/>
</dbReference>
<dbReference type="GO" id="GO:0005829">
    <property type="term" value="C:cytosol"/>
    <property type="evidence" value="ECO:0007669"/>
    <property type="project" value="TreeGrafter"/>
</dbReference>
<dbReference type="GO" id="GO:0052908">
    <property type="term" value="F:16S rRNA (adenine(1518)-N(6)/adenine(1519)-N(6))-dimethyltransferase activity"/>
    <property type="evidence" value="ECO:0007669"/>
    <property type="project" value="UniProtKB-EC"/>
</dbReference>
<dbReference type="GO" id="GO:0003723">
    <property type="term" value="F:RNA binding"/>
    <property type="evidence" value="ECO:0007669"/>
    <property type="project" value="UniProtKB-KW"/>
</dbReference>
<dbReference type="CDD" id="cd02440">
    <property type="entry name" value="AdoMet_MTases"/>
    <property type="match status" value="1"/>
</dbReference>
<dbReference type="FunFam" id="1.10.8.100:FF:000002">
    <property type="entry name" value="Ribosomal RNA small subunit methyltransferase A"/>
    <property type="match status" value="1"/>
</dbReference>
<dbReference type="FunFam" id="3.40.50.150:FF:000023">
    <property type="entry name" value="Ribosomal RNA small subunit methyltransferase A"/>
    <property type="match status" value="1"/>
</dbReference>
<dbReference type="Gene3D" id="1.10.8.100">
    <property type="entry name" value="Ribosomal RNA adenine dimethylase-like, domain 2"/>
    <property type="match status" value="1"/>
</dbReference>
<dbReference type="Gene3D" id="3.40.50.150">
    <property type="entry name" value="Vaccinia Virus protein VP39"/>
    <property type="match status" value="1"/>
</dbReference>
<dbReference type="HAMAP" id="MF_00607">
    <property type="entry name" value="16SrRNA_methyltr_A"/>
    <property type="match status" value="1"/>
</dbReference>
<dbReference type="InterPro" id="IPR001737">
    <property type="entry name" value="KsgA/Erm"/>
</dbReference>
<dbReference type="InterPro" id="IPR023165">
    <property type="entry name" value="rRNA_Ade_diMease-like_C"/>
</dbReference>
<dbReference type="InterPro" id="IPR020596">
    <property type="entry name" value="rRNA_Ade_Mease_Trfase_CS"/>
</dbReference>
<dbReference type="InterPro" id="IPR020598">
    <property type="entry name" value="rRNA_Ade_methylase_Trfase_N"/>
</dbReference>
<dbReference type="InterPro" id="IPR011530">
    <property type="entry name" value="rRNA_adenine_dimethylase"/>
</dbReference>
<dbReference type="InterPro" id="IPR029063">
    <property type="entry name" value="SAM-dependent_MTases_sf"/>
</dbReference>
<dbReference type="NCBIfam" id="TIGR00755">
    <property type="entry name" value="ksgA"/>
    <property type="match status" value="1"/>
</dbReference>
<dbReference type="PANTHER" id="PTHR11727">
    <property type="entry name" value="DIMETHYLADENOSINE TRANSFERASE"/>
    <property type="match status" value="1"/>
</dbReference>
<dbReference type="PANTHER" id="PTHR11727:SF7">
    <property type="entry name" value="DIMETHYLADENOSINE TRANSFERASE-RELATED"/>
    <property type="match status" value="1"/>
</dbReference>
<dbReference type="Pfam" id="PF00398">
    <property type="entry name" value="RrnaAD"/>
    <property type="match status" value="1"/>
</dbReference>
<dbReference type="SMART" id="SM00650">
    <property type="entry name" value="rADc"/>
    <property type="match status" value="1"/>
</dbReference>
<dbReference type="SUPFAM" id="SSF53335">
    <property type="entry name" value="S-adenosyl-L-methionine-dependent methyltransferases"/>
    <property type="match status" value="1"/>
</dbReference>
<dbReference type="PROSITE" id="PS01131">
    <property type="entry name" value="RRNA_A_DIMETH"/>
    <property type="match status" value="1"/>
</dbReference>
<dbReference type="PROSITE" id="PS51689">
    <property type="entry name" value="SAM_RNA_A_N6_MT"/>
    <property type="match status" value="1"/>
</dbReference>
<evidence type="ECO:0000255" key="1">
    <source>
        <dbReference type="HAMAP-Rule" id="MF_00607"/>
    </source>
</evidence>